<feature type="chain" id="PRO_0000426904" description="Uncharacterized protein MT1533.2">
    <location>
        <begin position="1"/>
        <end position="381"/>
    </location>
</feature>
<feature type="transmembrane region" description="Helical" evidence="1">
    <location>
        <begin position="3"/>
        <end position="23"/>
    </location>
</feature>
<organism>
    <name type="scientific">Mycobacterium tuberculosis (strain CDC 1551 / Oshkosh)</name>
    <dbReference type="NCBI Taxonomy" id="83331"/>
    <lineage>
        <taxon>Bacteria</taxon>
        <taxon>Bacillati</taxon>
        <taxon>Actinomycetota</taxon>
        <taxon>Actinomycetes</taxon>
        <taxon>Mycobacteriales</taxon>
        <taxon>Mycobacteriaceae</taxon>
        <taxon>Mycobacterium</taxon>
        <taxon>Mycobacterium tuberculosis complex</taxon>
    </lineage>
</organism>
<name>Y1488_MYCTO</name>
<comment type="subcellular location">
    <subcellularLocation>
        <location evidence="2">Membrane</location>
        <topology evidence="2">Single-pass membrane protein</topology>
    </subcellularLocation>
</comment>
<comment type="similarity">
    <text evidence="2">Belongs to the band 7/mec-2 family.</text>
</comment>
<sequence length="381" mass="41282">MQGAVAGLVFLAVLVIFAIIVVAKSVALIPQAEAAVIERLGRYSRTVSGQLTLLVPFIDRVRARVDLRERVVSFPPQPVITEDNLTLNIDTVVYFQVTVPQAAVYEISNYIVGVEQLTTTTLRNVVGGMTLEQTLTSRDQINAQLRGVLDEATGRWGLRVARVELRSIDPPPSIQASMEKQMKADREKRAMILTAEGTREAAIKQAEGQKQAQILAAEGAKQAAILAAEADRQSRMLRAQGERAAAYLQAQGQAKAIEKTFAAIKAGRPTPEMLAYQYLQTLPEMARGDANKVWVVPSDFNAALQGFTRLLGKPGEDGVFRFEPSPVEDQPKHAADGDDAEVAGWFSTDTDPSIARAVATAEAIARKPVEGSLGTPPRLTQ</sequence>
<evidence type="ECO:0000255" key="1"/>
<evidence type="ECO:0000305" key="2"/>
<keyword id="KW-0472">Membrane</keyword>
<keyword id="KW-1185">Reference proteome</keyword>
<keyword id="KW-0812">Transmembrane</keyword>
<keyword id="KW-1133">Transmembrane helix</keyword>
<dbReference type="EMBL" id="AE000516">
    <property type="protein sequence ID" value="AAK45800.1"/>
    <property type="molecule type" value="Genomic_DNA"/>
</dbReference>
<dbReference type="PIR" id="C70711">
    <property type="entry name" value="C70711"/>
</dbReference>
<dbReference type="RefSeq" id="WP_003407571.1">
    <property type="nucleotide sequence ID" value="NZ_KK341227.1"/>
</dbReference>
<dbReference type="SMR" id="P9WPR8"/>
<dbReference type="KEGG" id="mtc:MT1533.2"/>
<dbReference type="PATRIC" id="fig|83331.31.peg.1650"/>
<dbReference type="HOGENOM" id="CLU_024949_0_1_11"/>
<dbReference type="Proteomes" id="UP000001020">
    <property type="component" value="Chromosome"/>
</dbReference>
<dbReference type="GO" id="GO:0016020">
    <property type="term" value="C:membrane"/>
    <property type="evidence" value="ECO:0007669"/>
    <property type="project" value="UniProtKB-SubCell"/>
</dbReference>
<dbReference type="CDD" id="cd08829">
    <property type="entry name" value="SPFH_paraslipin"/>
    <property type="match status" value="1"/>
</dbReference>
<dbReference type="FunFam" id="3.30.479.30:FF:000019">
    <property type="entry name" value="Possible exported conserved protein"/>
    <property type="match status" value="1"/>
</dbReference>
<dbReference type="Gene3D" id="3.30.479.30">
    <property type="entry name" value="Band 7 domain"/>
    <property type="match status" value="1"/>
</dbReference>
<dbReference type="InterPro" id="IPR050710">
    <property type="entry name" value="Band7/mec-2_domain"/>
</dbReference>
<dbReference type="InterPro" id="IPR001107">
    <property type="entry name" value="Band_7"/>
</dbReference>
<dbReference type="InterPro" id="IPR036013">
    <property type="entry name" value="Band_7/SPFH_dom_sf"/>
</dbReference>
<dbReference type="InterPro" id="IPR018080">
    <property type="entry name" value="Band_7/stomatin-like_CS"/>
</dbReference>
<dbReference type="InterPro" id="IPR001972">
    <property type="entry name" value="Stomatin_HflK_fam"/>
</dbReference>
<dbReference type="PANTHER" id="PTHR43327">
    <property type="entry name" value="STOMATIN-LIKE PROTEIN 2, MITOCHONDRIAL"/>
    <property type="match status" value="1"/>
</dbReference>
<dbReference type="PANTHER" id="PTHR43327:SF10">
    <property type="entry name" value="STOMATIN-LIKE PROTEIN 2, MITOCHONDRIAL"/>
    <property type="match status" value="1"/>
</dbReference>
<dbReference type="Pfam" id="PF01145">
    <property type="entry name" value="Band_7"/>
    <property type="match status" value="1"/>
</dbReference>
<dbReference type="PRINTS" id="PR00721">
    <property type="entry name" value="STOMATIN"/>
</dbReference>
<dbReference type="SMART" id="SM00244">
    <property type="entry name" value="PHB"/>
    <property type="match status" value="1"/>
</dbReference>
<dbReference type="SUPFAM" id="SSF117892">
    <property type="entry name" value="Band 7/SPFH domain"/>
    <property type="match status" value="1"/>
</dbReference>
<dbReference type="PROSITE" id="PS01270">
    <property type="entry name" value="BAND_7"/>
    <property type="match status" value="1"/>
</dbReference>
<proteinExistence type="inferred from homology"/>
<accession>P9WPR8</accession>
<accession>L0T9S2</accession>
<accession>P63693</accession>
<accession>P71768</accession>
<reference key="1">
    <citation type="journal article" date="2002" name="J. Bacteriol.">
        <title>Whole-genome comparison of Mycobacterium tuberculosis clinical and laboratory strains.</title>
        <authorList>
            <person name="Fleischmann R.D."/>
            <person name="Alland D."/>
            <person name="Eisen J.A."/>
            <person name="Carpenter L."/>
            <person name="White O."/>
            <person name="Peterson J.D."/>
            <person name="DeBoy R.T."/>
            <person name="Dodson R.J."/>
            <person name="Gwinn M.L."/>
            <person name="Haft D.H."/>
            <person name="Hickey E.K."/>
            <person name="Kolonay J.F."/>
            <person name="Nelson W.C."/>
            <person name="Umayam L.A."/>
            <person name="Ermolaeva M.D."/>
            <person name="Salzberg S.L."/>
            <person name="Delcher A."/>
            <person name="Utterback T.R."/>
            <person name="Weidman J.F."/>
            <person name="Khouri H.M."/>
            <person name="Gill J."/>
            <person name="Mikula A."/>
            <person name="Bishai W."/>
            <person name="Jacobs W.R. Jr."/>
            <person name="Venter J.C."/>
            <person name="Fraser C.M."/>
        </authorList>
    </citation>
    <scope>NUCLEOTIDE SEQUENCE [LARGE SCALE GENOMIC DNA]</scope>
    <source>
        <strain>CDC 1551 / Oshkosh</strain>
    </source>
</reference>
<gene>
    <name type="ordered locus">MT1533.2</name>
</gene>
<protein>
    <recommendedName>
        <fullName>Uncharacterized protein MT1533.2</fullName>
    </recommendedName>
</protein>